<accession>O75828</accession>
<accession>Q6FHP2</accession>
<protein>
    <recommendedName>
        <fullName evidence="10">Carbonyl reductase [NADPH] 3</fullName>
        <ecNumber evidence="6">1.1.1.184</ecNumber>
    </recommendedName>
    <alternativeName>
        <fullName>NADPH-dependent carbonyl reductase 3</fullName>
    </alternativeName>
    <alternativeName>
        <fullName evidence="10">Quinone reductase CBR3</fullName>
        <ecNumber evidence="5 7">1.6.5.10</ecNumber>
    </alternativeName>
    <alternativeName>
        <fullName>Short chain dehydrogenase/reductase family 21C member 2</fullName>
    </alternativeName>
</protein>
<feature type="initiator methionine" description="Removed" evidence="2">
    <location>
        <position position="1"/>
    </location>
</feature>
<feature type="chain" id="PRO_0000054608" description="Carbonyl reductase [NADPH] 3">
    <location>
        <begin position="2"/>
        <end position="277"/>
    </location>
</feature>
<feature type="active site" description="Proton acceptor" evidence="4">
    <location>
        <position position="194"/>
    </location>
</feature>
<feature type="binding site" evidence="8">
    <location>
        <begin position="10"/>
        <end position="34"/>
    </location>
    <ligand>
        <name>NADP(+)</name>
        <dbReference type="ChEBI" id="CHEBI:58349"/>
    </ligand>
</feature>
<feature type="binding site" evidence="8">
    <location>
        <begin position="38"/>
        <end position="42"/>
    </location>
    <ligand>
        <name>NADP(+)</name>
        <dbReference type="ChEBI" id="CHEBI:58349"/>
    </ligand>
</feature>
<feature type="binding site" evidence="8">
    <location>
        <begin position="63"/>
        <end position="64"/>
    </location>
    <ligand>
        <name>NADP(+)</name>
        <dbReference type="ChEBI" id="CHEBI:58349"/>
    </ligand>
</feature>
<feature type="binding site" evidence="8">
    <location>
        <position position="90"/>
    </location>
    <ligand>
        <name>NADP(+)</name>
        <dbReference type="ChEBI" id="CHEBI:58349"/>
    </ligand>
</feature>
<feature type="binding site" evidence="1">
    <location>
        <position position="140"/>
    </location>
    <ligand>
        <name>substrate</name>
    </ligand>
</feature>
<feature type="binding site" evidence="8">
    <location>
        <begin position="194"/>
        <end position="198"/>
    </location>
    <ligand>
        <name>NADP(+)</name>
        <dbReference type="ChEBI" id="CHEBI:58349"/>
    </ligand>
</feature>
<feature type="binding site" evidence="8">
    <location>
        <position position="239"/>
    </location>
    <ligand>
        <name>NADP(+)</name>
        <dbReference type="ChEBI" id="CHEBI:58349"/>
    </ligand>
</feature>
<feature type="modified residue" description="N-acetylserine" evidence="2">
    <location>
        <position position="2"/>
    </location>
</feature>
<feature type="modified residue" description="Phosphoserine" evidence="3">
    <location>
        <position position="30"/>
    </location>
</feature>
<feature type="sequence variant" id="VAR_033868" description="In dbSNP:rs8133052." evidence="9">
    <original>C</original>
    <variation>Y</variation>
    <location>
        <position position="4"/>
    </location>
</feature>
<feature type="sequence variant" id="VAR_033869" description="In dbSNP:rs9282628." evidence="9">
    <original>L</original>
    <variation>V</variation>
    <location>
        <position position="84"/>
    </location>
</feature>
<feature type="sequence variant" id="VAR_033870" description="In dbSNP:rs2835285.">
    <original>V</original>
    <variation>I</variation>
    <location>
        <position position="93"/>
    </location>
</feature>
<feature type="sequence variant" id="VAR_033871" description="In dbSNP:rs16993929." evidence="9">
    <original>P</original>
    <variation>S</variation>
    <location>
        <position position="131"/>
    </location>
</feature>
<feature type="sequence variant" id="VAR_033872" description="In dbSNP:rs4987121." evidence="9">
    <original>M</original>
    <variation>L</variation>
    <location>
        <position position="235"/>
    </location>
</feature>
<feature type="sequence variant" id="VAR_033873" description="Increased carbonyl reductase (NADPH) activity; exhibits a 2-fold higher Vmax with menadione; higher Vmax with NADP(H); does not affect Km for menadione; dbSNP:rs1056892." evidence="5 9">
    <original>V</original>
    <variation>M</variation>
    <location>
        <position position="244"/>
    </location>
</feature>
<feature type="mutagenesis site" description="Modest increase in carbonyl reductase (NADPH) activity toward 1,2-naphthoquinone." evidence="7">
    <original>Q</original>
    <variation>M</variation>
    <location>
        <position position="142"/>
    </location>
</feature>
<feature type="mutagenesis site" description="Decreased carbonyl reductase (NADPH) activity toward 1,2-naphthoquinone and isatin." evidence="7">
    <original>P</original>
    <variation>F</variation>
    <variation>W</variation>
    <location>
        <position position="230"/>
    </location>
</feature>
<feature type="mutagenesis site" description="Significant decreased of the Km value for isatin." evidence="7">
    <original>D</original>
    <variation>A</variation>
    <location>
        <position position="236"/>
    </location>
</feature>
<feature type="strand" evidence="14">
    <location>
        <begin position="7"/>
        <end position="12"/>
    </location>
</feature>
<feature type="helix" evidence="14">
    <location>
        <begin position="16"/>
        <end position="28"/>
    </location>
</feature>
<feature type="strand" evidence="14">
    <location>
        <begin position="30"/>
        <end position="39"/>
    </location>
</feature>
<feature type="helix" evidence="14">
    <location>
        <begin position="40"/>
        <end position="52"/>
    </location>
</feature>
<feature type="strand" evidence="14">
    <location>
        <begin position="58"/>
        <end position="61"/>
    </location>
</feature>
<feature type="helix" evidence="14">
    <location>
        <begin position="67"/>
        <end position="81"/>
    </location>
</feature>
<feature type="strand" evidence="14">
    <location>
        <begin position="82"/>
        <end position="89"/>
    </location>
</feature>
<feature type="helix" evidence="14">
    <location>
        <begin position="103"/>
        <end position="114"/>
    </location>
</feature>
<feature type="helix" evidence="14">
    <location>
        <begin position="116"/>
        <end position="125"/>
    </location>
</feature>
<feature type="helix" evidence="14">
    <location>
        <begin position="126"/>
        <end position="128"/>
    </location>
</feature>
<feature type="strand" evidence="14">
    <location>
        <begin position="129"/>
        <end position="138"/>
    </location>
</feature>
<feature type="helix" evidence="14">
    <location>
        <begin position="142"/>
        <end position="149"/>
    </location>
</feature>
<feature type="helix" evidence="14">
    <location>
        <begin position="152"/>
        <end position="159"/>
    </location>
</feature>
<feature type="helix" evidence="14">
    <location>
        <begin position="165"/>
        <end position="180"/>
    </location>
</feature>
<feature type="turn" evidence="14">
    <location>
        <begin position="184"/>
        <end position="188"/>
    </location>
</feature>
<feature type="helix" evidence="14">
    <location>
        <begin position="193"/>
        <end position="215"/>
    </location>
</feature>
<feature type="helix" evidence="14">
    <location>
        <begin position="217"/>
        <end position="219"/>
    </location>
</feature>
<feature type="strand" evidence="14">
    <location>
        <begin position="222"/>
        <end position="227"/>
    </location>
</feature>
<feature type="strand" evidence="14">
    <location>
        <begin position="237"/>
        <end position="239"/>
    </location>
</feature>
<feature type="helix" evidence="14">
    <location>
        <begin position="241"/>
        <end position="247"/>
    </location>
</feature>
<feature type="helix" evidence="14">
    <location>
        <begin position="249"/>
        <end position="255"/>
    </location>
</feature>
<feature type="strand" evidence="14">
    <location>
        <begin position="268"/>
        <end position="270"/>
    </location>
</feature>
<feature type="strand" evidence="14">
    <location>
        <begin position="273"/>
        <end position="275"/>
    </location>
</feature>
<keyword id="KW-0002">3D-structure</keyword>
<keyword id="KW-0007">Acetylation</keyword>
<keyword id="KW-0963">Cytoplasm</keyword>
<keyword id="KW-0521">NADP</keyword>
<keyword id="KW-0560">Oxidoreductase</keyword>
<keyword id="KW-0597">Phosphoprotein</keyword>
<keyword id="KW-1267">Proteomics identification</keyword>
<keyword id="KW-1185">Reference proteome</keyword>
<gene>
    <name evidence="13" type="primary">CBR3</name>
    <name evidence="13" type="synonym">SDR21C2</name>
</gene>
<proteinExistence type="evidence at protein level"/>
<reference key="1">
    <citation type="journal article" date="1998" name="Genomics">
        <title>Mapping of a novel human carbonyl reductase, CBR3, and ribosomal pseudogenes to human chromosome 21q22.2.</title>
        <authorList>
            <person name="Watanabe K."/>
            <person name="Sugawara C."/>
            <person name="Ono A."/>
            <person name="Fukuzumi Y."/>
            <person name="Itakura S."/>
            <person name="Yamazaki M."/>
            <person name="Tashiro H."/>
            <person name="Osoegawa K."/>
            <person name="Soeda E."/>
            <person name="Nomura T."/>
        </authorList>
    </citation>
    <scope>NUCLEOTIDE SEQUENCE [GENOMIC DNA / MRNA]</scope>
</reference>
<reference key="2">
    <citation type="submission" date="2000-04" db="EMBL/GenBank/DDBJ databases">
        <title>Homo sapiens mRNA for NADPH-dependent carbonyl reductase 3, complete cds.</title>
        <authorList>
            <person name="Shimizu N."/>
            <person name="Kudoh J."/>
            <person name="Shibuya K."/>
        </authorList>
    </citation>
    <scope>NUCLEOTIDE SEQUENCE [MRNA]</scope>
    <source>
        <tissue>Fetal kidney</tissue>
    </source>
</reference>
<reference key="3">
    <citation type="submission" date="2003-10" db="EMBL/GenBank/DDBJ databases">
        <title>Human fetal brain carbonyl reductases.</title>
        <authorList>
            <person name="Terada T."/>
            <person name="Mizobuchi H."/>
        </authorList>
    </citation>
    <scope>NUCLEOTIDE SEQUENCE [MRNA]</scope>
    <source>
        <tissue>Fetal brain</tissue>
    </source>
</reference>
<reference key="4">
    <citation type="submission" date="2004-06" db="EMBL/GenBank/DDBJ databases">
        <title>Cloning of human full open reading frames in Gateway(TM) system entry vector (pDONR201).</title>
        <authorList>
            <person name="Halleck A."/>
            <person name="Ebert L."/>
            <person name="Mkoundinya M."/>
            <person name="Schick M."/>
            <person name="Eisenstein S."/>
            <person name="Neubert P."/>
            <person name="Kstrang K."/>
            <person name="Schatten R."/>
            <person name="Shen B."/>
            <person name="Henze S."/>
            <person name="Mar W."/>
            <person name="Korn B."/>
            <person name="Zuo D."/>
            <person name="Hu Y."/>
            <person name="LaBaer J."/>
        </authorList>
    </citation>
    <scope>NUCLEOTIDE SEQUENCE [LARGE SCALE MRNA]</scope>
</reference>
<reference key="5">
    <citation type="submission" date="2007-02" db="EMBL/GenBank/DDBJ databases">
        <authorList>
            <consortium name="SeattleSNPs variation discovery resource"/>
        </authorList>
    </citation>
    <scope>NUCLEOTIDE SEQUENCE [GENOMIC DNA]</scope>
    <scope>VARIANTS TYR-4; VAL-84; SER-131; LEU-235 AND MET-244</scope>
</reference>
<reference key="6">
    <citation type="journal article" date="2000" name="Nature">
        <title>The DNA sequence of human chromosome 21.</title>
        <authorList>
            <person name="Hattori M."/>
            <person name="Fujiyama A."/>
            <person name="Taylor T.D."/>
            <person name="Watanabe H."/>
            <person name="Yada T."/>
            <person name="Park H.-S."/>
            <person name="Toyoda A."/>
            <person name="Ishii K."/>
            <person name="Totoki Y."/>
            <person name="Choi D.-K."/>
            <person name="Groner Y."/>
            <person name="Soeda E."/>
            <person name="Ohki M."/>
            <person name="Takagi T."/>
            <person name="Sakaki Y."/>
            <person name="Taudien S."/>
            <person name="Blechschmidt K."/>
            <person name="Polley A."/>
            <person name="Menzel U."/>
            <person name="Delabar J."/>
            <person name="Kumpf K."/>
            <person name="Lehmann R."/>
            <person name="Patterson D."/>
            <person name="Reichwald K."/>
            <person name="Rump A."/>
            <person name="Schillhabel M."/>
            <person name="Schudy A."/>
            <person name="Zimmermann W."/>
            <person name="Rosenthal A."/>
            <person name="Kudoh J."/>
            <person name="Shibuya K."/>
            <person name="Kawasaki K."/>
            <person name="Asakawa S."/>
            <person name="Shintani A."/>
            <person name="Sasaki T."/>
            <person name="Nagamine K."/>
            <person name="Mitsuyama S."/>
            <person name="Antonarakis S.E."/>
            <person name="Minoshima S."/>
            <person name="Shimizu N."/>
            <person name="Nordsiek G."/>
            <person name="Hornischer K."/>
            <person name="Brandt P."/>
            <person name="Scharfe M."/>
            <person name="Schoen O."/>
            <person name="Desario A."/>
            <person name="Reichelt J."/>
            <person name="Kauer G."/>
            <person name="Bloecker H."/>
            <person name="Ramser J."/>
            <person name="Beck A."/>
            <person name="Klages S."/>
            <person name="Hennig S."/>
            <person name="Riesselmann L."/>
            <person name="Dagand E."/>
            <person name="Wehrmeyer S."/>
            <person name="Borzym K."/>
            <person name="Gardiner K."/>
            <person name="Nizetic D."/>
            <person name="Francis F."/>
            <person name="Lehrach H."/>
            <person name="Reinhardt R."/>
            <person name="Yaspo M.-L."/>
        </authorList>
    </citation>
    <scope>NUCLEOTIDE SEQUENCE [LARGE SCALE GENOMIC DNA]</scope>
</reference>
<reference key="7">
    <citation type="submission" date="2005-09" db="EMBL/GenBank/DDBJ databases">
        <authorList>
            <person name="Mural R.J."/>
            <person name="Istrail S."/>
            <person name="Sutton G.G."/>
            <person name="Florea L."/>
            <person name="Halpern A.L."/>
            <person name="Mobarry C.M."/>
            <person name="Lippert R."/>
            <person name="Walenz B."/>
            <person name="Shatkay H."/>
            <person name="Dew I."/>
            <person name="Miller J.R."/>
            <person name="Flanigan M.J."/>
            <person name="Edwards N.J."/>
            <person name="Bolanos R."/>
            <person name="Fasulo D."/>
            <person name="Halldorsson B.V."/>
            <person name="Hannenhalli S."/>
            <person name="Turner R."/>
            <person name="Yooseph S."/>
            <person name="Lu F."/>
            <person name="Nusskern D.R."/>
            <person name="Shue B.C."/>
            <person name="Zheng X.H."/>
            <person name="Zhong F."/>
            <person name="Delcher A.L."/>
            <person name="Huson D.H."/>
            <person name="Kravitz S.A."/>
            <person name="Mouchard L."/>
            <person name="Reinert K."/>
            <person name="Remington K.A."/>
            <person name="Clark A.G."/>
            <person name="Waterman M.S."/>
            <person name="Eichler E.E."/>
            <person name="Adams M.D."/>
            <person name="Hunkapiller M.W."/>
            <person name="Myers E.W."/>
            <person name="Venter J.C."/>
        </authorList>
    </citation>
    <scope>NUCLEOTIDE SEQUENCE [LARGE SCALE GENOMIC DNA]</scope>
</reference>
<reference key="8">
    <citation type="journal article" date="2004" name="Genome Res.">
        <title>The status, quality, and expansion of the NIH full-length cDNA project: the Mammalian Gene Collection (MGC).</title>
        <authorList>
            <consortium name="The MGC Project Team"/>
        </authorList>
    </citation>
    <scope>NUCLEOTIDE SEQUENCE [LARGE SCALE MRNA]</scope>
    <source>
        <tissue>Placenta</tissue>
    </source>
</reference>
<reference key="9">
    <citation type="journal article" date="2005" name="Drug Metab. Dispos.">
        <title>Functional significance of a natural allelic variant of human carbonyl reductase 3 (CBR3).</title>
        <authorList>
            <person name="Lakhman S.S."/>
            <person name="Ghosh D."/>
            <person name="Blanco J.G."/>
        </authorList>
    </citation>
    <scope>FUNCTION</scope>
    <scope>CATALYTIC ACTIVITY</scope>
    <scope>CHARACTERIZATION OF VARIANT MET-244</scope>
    <scope>BIOPHYSICOCHEMICAL PROPERTIES</scope>
</reference>
<reference key="10">
    <citation type="journal article" date="2008" name="Mol. Cell. Biochem.">
        <title>Different functions between human monomeric carbonyl reductase 3 and carbonyl reductase 1.</title>
        <authorList>
            <person name="Miura T."/>
            <person name="Nishinaka T."/>
            <person name="Terada T."/>
        </authorList>
    </citation>
    <scope>FUNCTION</scope>
    <scope>SUBCELLULAR LOCATION</scope>
    <scope>TISSUE SPECIFICITY</scope>
    <scope>BIOPHYSICOCHEMICAL PROPERTIES</scope>
    <scope>CATALYTIC ACTIVITY</scope>
</reference>
<reference key="11">
    <citation type="journal article" date="2009" name="PLoS ONE">
        <title>Structural basis for substrate specificity in human monomeric carbonyl reductases.</title>
        <authorList>
            <person name="Pilka E.S."/>
            <person name="Niesen F.H."/>
            <person name="Lee W.H."/>
            <person name="El-Hawari Y."/>
            <person name="Dunford J.E."/>
            <person name="Kochan G."/>
            <person name="Wsol V."/>
            <person name="Martin H.J."/>
            <person name="Maser E."/>
            <person name="Oppermann U."/>
        </authorList>
    </citation>
    <scope>FUNCTION</scope>
    <scope>CATALYTIC ACTIVITY</scope>
    <scope>SUBSTRATE SPECIFICITY</scope>
    <scope>BIOPHYSICOCHEMICAL PROPERTIES</scope>
    <scope>MUTAGENESIS OF GLN-142; PRO-230 AND ASP-236</scope>
</reference>
<reference key="12">
    <citation type="journal article" date="2011" name="BMC Syst. Biol.">
        <title>Initial characterization of the human central proteome.</title>
        <authorList>
            <person name="Burkard T.R."/>
            <person name="Planyavsky M."/>
            <person name="Kaupe I."/>
            <person name="Breitwieser F.P."/>
            <person name="Buerckstuemmer T."/>
            <person name="Bennett K.L."/>
            <person name="Superti-Furga G."/>
            <person name="Colinge J."/>
        </authorList>
    </citation>
    <scope>IDENTIFICATION BY MASS SPECTROMETRY [LARGE SCALE ANALYSIS]</scope>
</reference>
<reference key="13">
    <citation type="submission" date="2009-02" db="PDB data bank">
        <title>Crystal structure of human carbonyl reductase 3, complexed with NADP+.</title>
        <authorList>
            <consortium name="Structural genomics consortium (SGC)"/>
        </authorList>
    </citation>
    <scope>X-RAY CRYSTALLOGRAPHY (1.9 ANGSTROMS) OF 6-276 IN COMPLEX WITH NADP</scope>
</reference>
<organism>
    <name type="scientific">Homo sapiens</name>
    <name type="common">Human</name>
    <dbReference type="NCBI Taxonomy" id="9606"/>
    <lineage>
        <taxon>Eukaryota</taxon>
        <taxon>Metazoa</taxon>
        <taxon>Chordata</taxon>
        <taxon>Craniata</taxon>
        <taxon>Vertebrata</taxon>
        <taxon>Euteleostomi</taxon>
        <taxon>Mammalia</taxon>
        <taxon>Eutheria</taxon>
        <taxon>Euarchontoglires</taxon>
        <taxon>Primates</taxon>
        <taxon>Haplorrhini</taxon>
        <taxon>Catarrhini</taxon>
        <taxon>Hominidae</taxon>
        <taxon>Homo</taxon>
    </lineage>
</organism>
<name>CBR3_HUMAN</name>
<sequence>MSSCSRVALVTGANRGIGLAIARELCRQFSGDVVLTARDVARGQAAVQQLQAEGLSPRFHQLDIDDLQSIRALRDFLRKEYGGLNVLVNNAAVAFKSDDPMPFDIKAEMTLKTNFFATRNMCNELLPIMKPHGRVVNISSLQCLRAFENCSEDLQERFHSETLTEGDLVDLMKKFVEDTKNEVHEREGWPNSPYGVSKLGVTVLSRILARRLDEKRKADRILVNACCPGPVKTDMDGKDSIRTVEEGAETPVYLALLPPDATEPQGQLVHDKVVQNW</sequence>
<dbReference type="EC" id="1.1.1.184" evidence="6"/>
<dbReference type="EC" id="1.6.5.10" evidence="5 7"/>
<dbReference type="EMBL" id="AB004854">
    <property type="protein sequence ID" value="BAA33500.1"/>
    <property type="molecule type" value="mRNA"/>
</dbReference>
<dbReference type="EMBL" id="AB003151">
    <property type="protein sequence ID" value="BAA34207.1"/>
    <property type="molecule type" value="Genomic_DNA"/>
</dbReference>
<dbReference type="EMBL" id="AB041012">
    <property type="protein sequence ID" value="BAD74062.1"/>
    <property type="molecule type" value="mRNA"/>
</dbReference>
<dbReference type="EMBL" id="AB124847">
    <property type="protein sequence ID" value="BAE45939.1"/>
    <property type="molecule type" value="mRNA"/>
</dbReference>
<dbReference type="EMBL" id="CR541709">
    <property type="protein sequence ID" value="CAG46510.1"/>
    <property type="molecule type" value="mRNA"/>
</dbReference>
<dbReference type="EMBL" id="EF462915">
    <property type="protein sequence ID" value="ABO43035.1"/>
    <property type="molecule type" value="Genomic_DNA"/>
</dbReference>
<dbReference type="EMBL" id="AP000689">
    <property type="protein sequence ID" value="BAA89425.1"/>
    <property type="molecule type" value="Genomic_DNA"/>
</dbReference>
<dbReference type="EMBL" id="AP001725">
    <property type="protein sequence ID" value="BAA95547.1"/>
    <property type="molecule type" value="Genomic_DNA"/>
</dbReference>
<dbReference type="EMBL" id="CH471079">
    <property type="protein sequence ID" value="EAX09747.1"/>
    <property type="molecule type" value="Genomic_DNA"/>
</dbReference>
<dbReference type="EMBL" id="BC002812">
    <property type="protein sequence ID" value="AAH02812.1"/>
    <property type="molecule type" value="mRNA"/>
</dbReference>
<dbReference type="CCDS" id="CCDS13642.1"/>
<dbReference type="RefSeq" id="NP_001227.1">
    <property type="nucleotide sequence ID" value="NM_001236.4"/>
</dbReference>
<dbReference type="PDB" id="2HRB">
    <property type="method" value="X-ray"/>
    <property type="resolution" value="1.90 A"/>
    <property type="chains" value="A=6-277"/>
</dbReference>
<dbReference type="PDBsum" id="2HRB"/>
<dbReference type="SMR" id="O75828"/>
<dbReference type="BioGRID" id="107320">
    <property type="interactions" value="46"/>
</dbReference>
<dbReference type="FunCoup" id="O75828">
    <property type="interactions" value="499"/>
</dbReference>
<dbReference type="IntAct" id="O75828">
    <property type="interactions" value="28"/>
</dbReference>
<dbReference type="MINT" id="O75828"/>
<dbReference type="STRING" id="9606.ENSP00000290354"/>
<dbReference type="ChEMBL" id="CHEMBL6008"/>
<dbReference type="DrugBank" id="DB00694">
    <property type="generic name" value="Daunorubicin"/>
</dbReference>
<dbReference type="DrugBank" id="DB12161">
    <property type="generic name" value="Deutetrabenazine"/>
</dbReference>
<dbReference type="DrugBank" id="DB00997">
    <property type="generic name" value="Doxorubicin"/>
</dbReference>
<dbReference type="DrugBank" id="DB00776">
    <property type="generic name" value="Oxcarbazepine"/>
</dbReference>
<dbReference type="GlyGen" id="O75828">
    <property type="glycosylation" value="2 sites, 1 N-linked glycan (1 site), 1 O-linked glycan (1 site)"/>
</dbReference>
<dbReference type="iPTMnet" id="O75828"/>
<dbReference type="PhosphoSitePlus" id="O75828"/>
<dbReference type="SwissPalm" id="O75828"/>
<dbReference type="BioMuta" id="CBR3"/>
<dbReference type="REPRODUCTION-2DPAGE" id="IPI00290462"/>
<dbReference type="jPOST" id="O75828"/>
<dbReference type="MassIVE" id="O75828"/>
<dbReference type="PaxDb" id="9606-ENSP00000290354"/>
<dbReference type="PeptideAtlas" id="O75828"/>
<dbReference type="ProteomicsDB" id="50216"/>
<dbReference type="Pumba" id="O75828"/>
<dbReference type="Antibodypedia" id="8258">
    <property type="antibodies" value="319 antibodies from 34 providers"/>
</dbReference>
<dbReference type="DNASU" id="874"/>
<dbReference type="Ensembl" id="ENST00000290354.6">
    <property type="protein sequence ID" value="ENSP00000290354.5"/>
    <property type="gene ID" value="ENSG00000159231.6"/>
</dbReference>
<dbReference type="GeneID" id="874"/>
<dbReference type="KEGG" id="hsa:874"/>
<dbReference type="MANE-Select" id="ENST00000290354.6">
    <property type="protein sequence ID" value="ENSP00000290354.5"/>
    <property type="RefSeq nucleotide sequence ID" value="NM_001236.4"/>
    <property type="RefSeq protein sequence ID" value="NP_001227.1"/>
</dbReference>
<dbReference type="AGR" id="HGNC:1549"/>
<dbReference type="CTD" id="874"/>
<dbReference type="DisGeNET" id="874"/>
<dbReference type="GeneCards" id="CBR3"/>
<dbReference type="HGNC" id="HGNC:1549">
    <property type="gene designation" value="CBR3"/>
</dbReference>
<dbReference type="HPA" id="ENSG00000159231">
    <property type="expression patterns" value="Tissue enhanced (esophagus, salivary gland)"/>
</dbReference>
<dbReference type="MIM" id="603608">
    <property type="type" value="gene"/>
</dbReference>
<dbReference type="neXtProt" id="NX_O75828"/>
<dbReference type="OpenTargets" id="ENSG00000159231"/>
<dbReference type="PharmGKB" id="PA26122"/>
<dbReference type="VEuPathDB" id="HostDB:ENSG00000159231"/>
<dbReference type="eggNOG" id="KOG1208">
    <property type="taxonomic scope" value="Eukaryota"/>
</dbReference>
<dbReference type="GeneTree" id="ENSGT00940000162541"/>
<dbReference type="HOGENOM" id="CLU_010194_9_0_1"/>
<dbReference type="InParanoid" id="O75828"/>
<dbReference type="OMA" id="QKKFRCE"/>
<dbReference type="OrthoDB" id="7289984at2759"/>
<dbReference type="PAN-GO" id="O75828">
    <property type="GO annotations" value="1 GO annotation based on evolutionary models"/>
</dbReference>
<dbReference type="PhylomeDB" id="O75828"/>
<dbReference type="TreeFam" id="TF329359"/>
<dbReference type="BRENDA" id="1.1.1.184">
    <property type="organism ID" value="2681"/>
</dbReference>
<dbReference type="PathwayCommons" id="O75828"/>
<dbReference type="Reactome" id="R-HSA-211945">
    <property type="pathway name" value="Phase I - Functionalization of compounds"/>
</dbReference>
<dbReference type="SABIO-RK" id="O75828"/>
<dbReference type="SignaLink" id="O75828"/>
<dbReference type="BioGRID-ORCS" id="874">
    <property type="hits" value="9 hits in 1147 CRISPR screens"/>
</dbReference>
<dbReference type="CD-CODE" id="FB4E32DD">
    <property type="entry name" value="Presynaptic clusters and postsynaptic densities"/>
</dbReference>
<dbReference type="ChiTaRS" id="CBR3">
    <property type="organism name" value="human"/>
</dbReference>
<dbReference type="EvolutionaryTrace" id="O75828"/>
<dbReference type="GeneWiki" id="CBR3"/>
<dbReference type="GenomeRNAi" id="874"/>
<dbReference type="Pharos" id="O75828">
    <property type="development level" value="Tbio"/>
</dbReference>
<dbReference type="PRO" id="PR:O75828"/>
<dbReference type="Proteomes" id="UP000005640">
    <property type="component" value="Chromosome 21"/>
</dbReference>
<dbReference type="RNAct" id="O75828">
    <property type="molecule type" value="protein"/>
</dbReference>
<dbReference type="Bgee" id="ENSG00000159231">
    <property type="expression patterns" value="Expressed in gingival epithelium and 162 other cell types or tissues"/>
</dbReference>
<dbReference type="ExpressionAtlas" id="O75828">
    <property type="expression patterns" value="baseline and differential"/>
</dbReference>
<dbReference type="GO" id="GO:0005829">
    <property type="term" value="C:cytosol"/>
    <property type="evidence" value="ECO:0000314"/>
    <property type="project" value="UniProtKB"/>
</dbReference>
<dbReference type="GO" id="GO:0005615">
    <property type="term" value="C:extracellular space"/>
    <property type="evidence" value="ECO:0007005"/>
    <property type="project" value="UniProtKB"/>
</dbReference>
<dbReference type="GO" id="GO:0005654">
    <property type="term" value="C:nucleoplasm"/>
    <property type="evidence" value="ECO:0000314"/>
    <property type="project" value="HPA"/>
</dbReference>
<dbReference type="GO" id="GO:0000253">
    <property type="term" value="F:3-beta-hydroxysteroid 3-dehydrogenase (NADP+) activity"/>
    <property type="evidence" value="ECO:0007669"/>
    <property type="project" value="Ensembl"/>
</dbReference>
<dbReference type="GO" id="GO:0004090">
    <property type="term" value="F:carbonyl reductase (NADPH) activity"/>
    <property type="evidence" value="ECO:0000314"/>
    <property type="project" value="UniProtKB"/>
</dbReference>
<dbReference type="GO" id="GO:0070402">
    <property type="term" value="F:NADPH binding"/>
    <property type="evidence" value="ECO:0000314"/>
    <property type="project" value="UniProtKB"/>
</dbReference>
<dbReference type="GO" id="GO:0008753">
    <property type="term" value="F:NADPH dehydrogenase (quinone) activity"/>
    <property type="evidence" value="ECO:0000314"/>
    <property type="project" value="UniProtKB"/>
</dbReference>
<dbReference type="GO" id="GO:0050890">
    <property type="term" value="P:cognition"/>
    <property type="evidence" value="ECO:0000315"/>
    <property type="project" value="UniProtKB"/>
</dbReference>
<dbReference type="GO" id="GO:0042376">
    <property type="term" value="P:phylloquinone catabolic process"/>
    <property type="evidence" value="ECO:0007669"/>
    <property type="project" value="Ensembl"/>
</dbReference>
<dbReference type="GO" id="GO:0006805">
    <property type="term" value="P:xenobiotic metabolic process"/>
    <property type="evidence" value="ECO:0000304"/>
    <property type="project" value="Reactome"/>
</dbReference>
<dbReference type="CDD" id="cd05324">
    <property type="entry name" value="carb_red_PTCR-like_SDR_c"/>
    <property type="match status" value="1"/>
</dbReference>
<dbReference type="FunFam" id="3.40.50.720:FF:000164">
    <property type="entry name" value="Carbonyl reductase [NADPH] 1"/>
    <property type="match status" value="1"/>
</dbReference>
<dbReference type="Gene3D" id="3.40.50.720">
    <property type="entry name" value="NAD(P)-binding Rossmann-like Domain"/>
    <property type="match status" value="1"/>
</dbReference>
<dbReference type="InterPro" id="IPR045313">
    <property type="entry name" value="CBR1-like"/>
</dbReference>
<dbReference type="InterPro" id="IPR036291">
    <property type="entry name" value="NAD(P)-bd_dom_sf"/>
</dbReference>
<dbReference type="InterPro" id="IPR020904">
    <property type="entry name" value="Sc_DH/Rdtase_CS"/>
</dbReference>
<dbReference type="InterPro" id="IPR002347">
    <property type="entry name" value="SDR_fam"/>
</dbReference>
<dbReference type="PANTHER" id="PTHR43963">
    <property type="entry name" value="CARBONYL REDUCTASE 1-RELATED"/>
    <property type="match status" value="1"/>
</dbReference>
<dbReference type="PANTHER" id="PTHR43963:SF3">
    <property type="entry name" value="CARBONYL REDUCTASE [NADPH] 3"/>
    <property type="match status" value="1"/>
</dbReference>
<dbReference type="Pfam" id="PF00106">
    <property type="entry name" value="adh_short"/>
    <property type="match status" value="2"/>
</dbReference>
<dbReference type="PRINTS" id="PR00081">
    <property type="entry name" value="GDHRDH"/>
</dbReference>
<dbReference type="PRINTS" id="PR00080">
    <property type="entry name" value="SDRFAMILY"/>
</dbReference>
<dbReference type="SUPFAM" id="SSF51735">
    <property type="entry name" value="NAD(P)-binding Rossmann-fold domains"/>
    <property type="match status" value="1"/>
</dbReference>
<dbReference type="PROSITE" id="PS00061">
    <property type="entry name" value="ADH_SHORT"/>
    <property type="match status" value="1"/>
</dbReference>
<evidence type="ECO:0000250" key="1"/>
<evidence type="ECO:0000250" key="2">
    <source>
        <dbReference type="UniProtKB" id="P16152"/>
    </source>
</evidence>
<evidence type="ECO:0000250" key="3">
    <source>
        <dbReference type="UniProtKB" id="P48758"/>
    </source>
</evidence>
<evidence type="ECO:0000255" key="4">
    <source>
        <dbReference type="PROSITE-ProRule" id="PRU10001"/>
    </source>
</evidence>
<evidence type="ECO:0000269" key="5">
    <source>
    </source>
</evidence>
<evidence type="ECO:0000269" key="6">
    <source>
    </source>
</evidence>
<evidence type="ECO:0000269" key="7">
    <source>
    </source>
</evidence>
<evidence type="ECO:0000269" key="8">
    <source ref="13"/>
</evidence>
<evidence type="ECO:0000269" key="9">
    <source ref="5"/>
</evidence>
<evidence type="ECO:0000305" key="10"/>
<evidence type="ECO:0000305" key="11">
    <source>
    </source>
</evidence>
<evidence type="ECO:0000305" key="12">
    <source>
    </source>
</evidence>
<evidence type="ECO:0000312" key="13">
    <source>
        <dbReference type="HGNC" id="HGNC:1549"/>
    </source>
</evidence>
<evidence type="ECO:0007829" key="14">
    <source>
        <dbReference type="PDB" id="2HRB"/>
    </source>
</evidence>
<comment type="function">
    <text evidence="5 6 7">Catalyzes the NADPH-dependent reduction of carbonyl compounds to their corresponding alcohols (PubMed:18493841). Has low NADPH-dependent oxidoreductase activity. Acts on several orthoquinones, acts as well on non-quinone compounds, such as isatin or on the anticancer drug oracin (PubMed:15537833, PubMed:18493841, PubMed:19841672). Best substrates for CBR3 is 1,2- naphthoquinone, hence could play a role in protection against cytotoxicity of exogenous quinones (PubMed:19841672). Exerts activity toward ortho-quinones but not paraquinones. No endogenous substrate for CBR3 except isatin has been identified (PubMed:19841672).</text>
</comment>
<comment type="catalytic activity">
    <reaction evidence="6">
        <text>a secondary alcohol + NADP(+) = a ketone + NADPH + H(+)</text>
        <dbReference type="Rhea" id="RHEA:19257"/>
        <dbReference type="ChEBI" id="CHEBI:15378"/>
        <dbReference type="ChEBI" id="CHEBI:17087"/>
        <dbReference type="ChEBI" id="CHEBI:35681"/>
        <dbReference type="ChEBI" id="CHEBI:57783"/>
        <dbReference type="ChEBI" id="CHEBI:58349"/>
        <dbReference type="EC" id="1.1.1.184"/>
    </reaction>
    <physiologicalReaction direction="right-to-left" evidence="11">
        <dbReference type="Rhea" id="RHEA:19259"/>
    </physiologicalReaction>
</comment>
<comment type="catalytic activity">
    <reaction evidence="5 6 7">
        <text>a quinone + NADPH + H(+) = a quinol + NADP(+)</text>
        <dbReference type="Rhea" id="RHEA:46164"/>
        <dbReference type="ChEBI" id="CHEBI:15378"/>
        <dbReference type="ChEBI" id="CHEBI:24646"/>
        <dbReference type="ChEBI" id="CHEBI:57783"/>
        <dbReference type="ChEBI" id="CHEBI:58349"/>
        <dbReference type="ChEBI" id="CHEBI:132124"/>
        <dbReference type="EC" id="1.6.5.10"/>
    </reaction>
    <physiologicalReaction direction="left-to-right" evidence="12">
        <dbReference type="Rhea" id="RHEA:46165"/>
    </physiologicalReaction>
</comment>
<comment type="biophysicochemical properties">
    <kinetics>
        <KM evidence="5">25 uM for menadione</KM>
        <KM evidence="6">43 uM for menadione</KM>
        <KM evidence="6">300 uM for 4-benzoylpyridine</KM>
        <KM evidence="6">130 uM for 4-nitorobenzaldehyde</KM>
        <KM evidence="7">420 uM for 1,2-naphthoquinone</KM>
        <KM evidence="7">14630 uM for isatin</KM>
        <KM evidence="7">140 uM for oracin</KM>
        <KM evidence="5">90 uM for NADPH</KM>
        <KM evidence="6">38 uM for NADPH</KM>
        <Vmax evidence="7">6.0 umol/min/mg enzyme with 1,2-naphthoquinone as substrate</Vmax>
        <Vmax evidence="7">0.1 umol/min/mg enzyme with oracin as substrate</Vmax>
        <Vmax evidence="7">15.0 umol/min/mg enzyme with isatin as substrate</Vmax>
        <text evidence="6">kcat is 0.55 min(-1) with menadione as substrate (PubMed:18493841). kcat is 0.70 min(-1) with 4-benzoylpyridine as substrate (PubMed:18493841). kcat is 0.59 min(-1) with 4-nitorobenzaldehyde as substrate (PubMed:18493841).</text>
    </kinetics>
    <phDependence>
        <text evidence="5 6">Optimum pH is 5.5-7.</text>
    </phDependence>
</comment>
<comment type="interaction">
    <interactant intactId="EBI-714504">
        <id>O75828</id>
    </interactant>
    <interactant intactId="EBI-11975051">
        <id>Q8TD16-2</id>
        <label>BICD2</label>
    </interactant>
    <organismsDiffer>false</organismsDiffer>
    <experiments>3</experiments>
</comment>
<comment type="interaction">
    <interactant intactId="EBI-714504">
        <id>O75828</id>
    </interactant>
    <interactant intactId="EBI-351348">
        <id>P16152</id>
        <label>CBR1</label>
    </interactant>
    <organismsDiffer>false</organismsDiffer>
    <experiments>4</experiments>
</comment>
<comment type="interaction">
    <interactant intactId="EBI-714504">
        <id>O75828</id>
    </interactant>
    <interactant intactId="EBI-727004">
        <id>O00560</id>
        <label>SDCBP</label>
    </interactant>
    <organismsDiffer>false</organismsDiffer>
    <experiments>8</experiments>
</comment>
<comment type="subcellular location">
    <subcellularLocation>
        <location evidence="6">Cytoplasm</location>
    </subcellularLocation>
</comment>
<comment type="tissue specificity">
    <text evidence="6">Detected in ovary, pancreas, intestine, colon, kidney, brain, thymus, lung, heart, liver, spleen, leukocyte, prostate and testis.</text>
</comment>
<comment type="similarity">
    <text evidence="10">Belongs to the short-chain dehydrogenases/reductases (SDR) family.</text>
</comment>
<comment type="caution">
    <text evidence="5 6 7">There are conflicting results on the ability of CBR3 to metabolize menadione. Although menadione was originally reported as a good substrate of CBR3 (PubMed:15537833), results of later studies showed that CBR3 possesses very low or no activity toward menadione (PubMed:18493841, PubMed:19841672).</text>
</comment>